<sequence length="506" mass="55419">MLYAAPGTADAIFAFKPRYDNFIDGTWQPPVRGEYFDNVTPITGKVFCKAARSTEEDITLALDAAHAAADRWGRTTAAERALILNRIADRLQDNLETLAYVESIDNGKPIRETLAADIPLAIDHFRYFAACIRAQEGSLSQIDETTIAYHFNEPLGVVGQIIPWNFPILMATWKLAPALAAGNCIVLKPAEQTPISILVLTELIADLLPPGVLNVVNGFGLEAGKPLASSKRIAKIAFTGETATGRLIMQYASQNLIPVTLELGGKSPNVFFDDIASADDSFFDKAVEGFVMFALNQGEICTCPSRALIHESLYDRFIERALARVAVIKQGSPLDTETMIGAQASTEQMDKILSYMDIGREEGATVLAGGARAELGGELDGGYYVQPTVFKGNNSMRIFQEEIFGPVVAVTTFKDEDEALHLANDTHYGLGSGVWTRDGNRAFRFGRGIKAGRVWTNCYHLYPAHAAFGGYKQSGIGRENHHMMLDHYQQTKNLLVSYDPKAMGFF</sequence>
<gene>
    <name type="ordered locus">Rru_A0931</name>
</gene>
<comment type="catalytic activity">
    <reaction>
        <text>an aldehyde + NAD(+) + H2O = a carboxylate + NADH + 2 H(+)</text>
        <dbReference type="Rhea" id="RHEA:16185"/>
        <dbReference type="ChEBI" id="CHEBI:15377"/>
        <dbReference type="ChEBI" id="CHEBI:15378"/>
        <dbReference type="ChEBI" id="CHEBI:17478"/>
        <dbReference type="ChEBI" id="CHEBI:29067"/>
        <dbReference type="ChEBI" id="CHEBI:57540"/>
        <dbReference type="ChEBI" id="CHEBI:57945"/>
        <dbReference type="EC" id="1.2.1.3"/>
    </reaction>
</comment>
<comment type="similarity">
    <text evidence="2">Belongs to the aldehyde dehydrogenase family.</text>
</comment>
<organism>
    <name type="scientific">Rhodospirillum rubrum (strain ATCC 11170 / ATH 1.1.1 / DSM 467 / LMG 4362 / NCIMB 8255 / S1)</name>
    <dbReference type="NCBI Taxonomy" id="269796"/>
    <lineage>
        <taxon>Bacteria</taxon>
        <taxon>Pseudomonadati</taxon>
        <taxon>Pseudomonadota</taxon>
        <taxon>Alphaproteobacteria</taxon>
        <taxon>Rhodospirillales</taxon>
        <taxon>Rhodospirillaceae</taxon>
        <taxon>Rhodospirillum</taxon>
    </lineage>
</organism>
<keyword id="KW-0520">NAD</keyword>
<keyword id="KW-0560">Oxidoreductase</keyword>
<keyword id="KW-1185">Reference proteome</keyword>
<dbReference type="EC" id="1.2.1.3"/>
<dbReference type="EMBL" id="AB006976">
    <property type="protein sequence ID" value="BAA75070.1"/>
    <property type="molecule type" value="Genomic_DNA"/>
</dbReference>
<dbReference type="EMBL" id="CP000230">
    <property type="protein sequence ID" value="ABC21732.1"/>
    <property type="molecule type" value="Genomic_DNA"/>
</dbReference>
<dbReference type="RefSeq" id="YP_426019.1">
    <property type="nucleotide sequence ID" value="NC_007643.1"/>
</dbReference>
<dbReference type="SMR" id="Q9ZA11"/>
<dbReference type="STRING" id="269796.Rru_A0931"/>
<dbReference type="EnsemblBacteria" id="ABC21732">
    <property type="protein sequence ID" value="ABC21732"/>
    <property type="gene ID" value="Rru_A0931"/>
</dbReference>
<dbReference type="KEGG" id="rru:Rru_A0931"/>
<dbReference type="PATRIC" id="fig|269796.9.peg.987"/>
<dbReference type="eggNOG" id="COG1012">
    <property type="taxonomic scope" value="Bacteria"/>
</dbReference>
<dbReference type="HOGENOM" id="CLU_005391_0_2_5"/>
<dbReference type="PhylomeDB" id="Q9ZA11"/>
<dbReference type="Proteomes" id="UP000001929">
    <property type="component" value="Chromosome"/>
</dbReference>
<dbReference type="GO" id="GO:0004029">
    <property type="term" value="F:aldehyde dehydrogenase (NAD+) activity"/>
    <property type="evidence" value="ECO:0007669"/>
    <property type="project" value="UniProtKB-EC"/>
</dbReference>
<dbReference type="CDD" id="cd07116">
    <property type="entry name" value="ALDH_ACDHII-AcoD"/>
    <property type="match status" value="1"/>
</dbReference>
<dbReference type="FunFam" id="3.40.605.10:FF:000001">
    <property type="entry name" value="Aldehyde dehydrogenase 1"/>
    <property type="match status" value="1"/>
</dbReference>
<dbReference type="FunFam" id="3.40.309.10:FF:000017">
    <property type="entry name" value="Aldehyde dehydrogenase B"/>
    <property type="match status" value="1"/>
</dbReference>
<dbReference type="Gene3D" id="3.40.605.10">
    <property type="entry name" value="Aldehyde Dehydrogenase, Chain A, domain 1"/>
    <property type="match status" value="1"/>
</dbReference>
<dbReference type="Gene3D" id="3.40.309.10">
    <property type="entry name" value="Aldehyde Dehydrogenase, Chain A, domain 2"/>
    <property type="match status" value="1"/>
</dbReference>
<dbReference type="InterPro" id="IPR016161">
    <property type="entry name" value="Ald_DH/histidinol_DH"/>
</dbReference>
<dbReference type="InterPro" id="IPR016163">
    <property type="entry name" value="Ald_DH_C"/>
</dbReference>
<dbReference type="InterPro" id="IPR016160">
    <property type="entry name" value="Ald_DH_CS_CYS"/>
</dbReference>
<dbReference type="InterPro" id="IPR029510">
    <property type="entry name" value="Ald_DH_CS_GLU"/>
</dbReference>
<dbReference type="InterPro" id="IPR016162">
    <property type="entry name" value="Ald_DH_N"/>
</dbReference>
<dbReference type="InterPro" id="IPR015590">
    <property type="entry name" value="Aldehyde_DH_dom"/>
</dbReference>
<dbReference type="PANTHER" id="PTHR43111">
    <property type="entry name" value="ALDEHYDE DEHYDROGENASE B-RELATED"/>
    <property type="match status" value="1"/>
</dbReference>
<dbReference type="PANTHER" id="PTHR43111:SF1">
    <property type="entry name" value="ALDEHYDE DEHYDROGENASE B-RELATED"/>
    <property type="match status" value="1"/>
</dbReference>
<dbReference type="Pfam" id="PF00171">
    <property type="entry name" value="Aldedh"/>
    <property type="match status" value="1"/>
</dbReference>
<dbReference type="SUPFAM" id="SSF53720">
    <property type="entry name" value="ALDH-like"/>
    <property type="match status" value="1"/>
</dbReference>
<dbReference type="PROSITE" id="PS00070">
    <property type="entry name" value="ALDEHYDE_DEHYDR_CYS"/>
    <property type="match status" value="1"/>
</dbReference>
<dbReference type="PROSITE" id="PS00687">
    <property type="entry name" value="ALDEHYDE_DEHYDR_GLU"/>
    <property type="match status" value="1"/>
</dbReference>
<name>ALDH_RHORT</name>
<feature type="chain" id="PRO_0000056454" description="Aldehyde dehydrogenase">
    <location>
        <begin position="1"/>
        <end position="506"/>
    </location>
</feature>
<feature type="active site" evidence="1">
    <location>
        <position position="262"/>
    </location>
</feature>
<feature type="active site" evidence="1">
    <location>
        <position position="301"/>
    </location>
</feature>
<feature type="binding site" evidence="1">
    <location>
        <begin position="218"/>
        <end position="224"/>
    </location>
    <ligand>
        <name>NAD(+)</name>
        <dbReference type="ChEBI" id="CHEBI:57540"/>
    </ligand>
</feature>
<feature type="sequence conflict" description="In Ref. 1; BAA75070." evidence="2" ref="1">
    <original>N</original>
    <variation>K</variation>
    <location>
        <position position="165"/>
    </location>
</feature>
<feature type="sequence conflict" description="In Ref. 1; BAA75070." evidence="2" ref="1">
    <original>G</original>
    <variation>A</variation>
    <location>
        <position position="245"/>
    </location>
</feature>
<evidence type="ECO:0000250" key="1"/>
<evidence type="ECO:0000305" key="2"/>
<proteinExistence type="inferred from homology"/>
<accession>Q9ZA11</accession>
<accession>Q2RVW3</accession>
<reference key="1">
    <citation type="submission" date="1997-09" db="EMBL/GenBank/DDBJ databases">
        <title>Cloning of aldehyde dehydrogenase gene from photosynthetic bacterium Rhodospirillum rubrum.</title>
        <authorList>
            <person name="Okibe N."/>
            <person name="Amada K."/>
            <person name="Morikawa M."/>
            <person name="Kanaya S."/>
        </authorList>
    </citation>
    <scope>NUCLEOTIDE SEQUENCE [GENOMIC DNA]</scope>
</reference>
<reference key="2">
    <citation type="journal article" date="2011" name="Stand. Genomic Sci.">
        <title>Complete genome sequence of Rhodospirillum rubrum type strain (S1).</title>
        <authorList>
            <person name="Munk A.C."/>
            <person name="Copeland A."/>
            <person name="Lucas S."/>
            <person name="Lapidus A."/>
            <person name="Del Rio T.G."/>
            <person name="Barry K."/>
            <person name="Detter J.C."/>
            <person name="Hammon N."/>
            <person name="Israni S."/>
            <person name="Pitluck S."/>
            <person name="Brettin T."/>
            <person name="Bruce D."/>
            <person name="Han C."/>
            <person name="Tapia R."/>
            <person name="Gilna P."/>
            <person name="Schmutz J."/>
            <person name="Larimer F."/>
            <person name="Land M."/>
            <person name="Kyrpides N.C."/>
            <person name="Mavromatis K."/>
            <person name="Richardson P."/>
            <person name="Rohde M."/>
            <person name="Goeker M."/>
            <person name="Klenk H.P."/>
            <person name="Zhang Y."/>
            <person name="Roberts G.P."/>
            <person name="Reslewic S."/>
            <person name="Schwartz D.C."/>
        </authorList>
    </citation>
    <scope>NUCLEOTIDE SEQUENCE [LARGE SCALE GENOMIC DNA]</scope>
    <source>
        <strain>ATCC 11170 / ATH 1.1.1 / DSM 467 / LMG 4362 / NCIMB 8255 / S1</strain>
    </source>
</reference>
<protein>
    <recommendedName>
        <fullName>Aldehyde dehydrogenase</fullName>
        <ecNumber>1.2.1.3</ecNumber>
    </recommendedName>
</protein>